<protein>
    <recommendedName>
        <fullName evidence="6">Small ribosomal subunit protein bS1 homolog</fullName>
    </recommendedName>
    <alternativeName>
        <fullName evidence="6">30S ribosomal protein S1 homolog</fullName>
    </alternativeName>
</protein>
<name>RS1H_BACSU</name>
<sequence>MTEEMNQIDVQVPEVGDVVKGIVTKVEDKHVDVEIINVKQSGIIPISELSSLHVEKASDVVKVDDELDLKVTKVEDDALILSKRAVDADRAWEDLEKKFETKEVFEAEVKDVVKGGLVVDIGVRGFIPASLVEAHFVEDFTDYKGKTLSLLVVELDRDKNRVILSHRAVVESEQANKKQELLQSLEVGSVLDGKVQRLTDFGAFVDIGGIDGLVHISQLSHSHVEKPSDVVEEGQEVKVKVLSVDRDNERISLSIKDTLPGPWNQIGEKVKPGDVLEGTVQRLVSFGAFVEILPGVEGLVHISQISNKHIGTPHEVLEEGQTVKVKVLDVNENEERISLSMRELEETPKADQEDYRQYQAKEETSTGFQLGDLIGDKLNKLK</sequence>
<feature type="chain" id="PRO_0000196026" description="Small ribosomal subunit protein bS1 homolog">
    <location>
        <begin position="1"/>
        <end position="382"/>
    </location>
</feature>
<feature type="domain" description="S1 motif 1" evidence="1">
    <location>
        <begin position="16"/>
        <end position="84"/>
    </location>
</feature>
<feature type="domain" description="S1 motif 2" evidence="1">
    <location>
        <begin position="102"/>
        <end position="167"/>
    </location>
</feature>
<feature type="domain" description="S1 motif 3" evidence="1">
    <location>
        <begin position="188"/>
        <end position="256"/>
    </location>
</feature>
<feature type="domain" description="S1 motif 4" evidence="1">
    <location>
        <begin position="273"/>
        <end position="342"/>
    </location>
</feature>
<feature type="modified residue" description="Phosphoserine" evidence="3">
    <location>
        <position position="243"/>
    </location>
</feature>
<proteinExistence type="evidence at protein level"/>
<comment type="function">
    <text evidence="2 4">Plays a role in sporulation (PubMed:14586115). Cannot be expressed in wild-type E.coli, does not complement an E.coli rpsA deletion (PubMed:7704259).</text>
</comment>
<comment type="induction">
    <text evidence="4">Constitutively transcribed in minimal and rich medium, in exponential and stationary phase. May not be transcribed with the upstream gene (cmk), there is a probable transcription terminator between the 2 genes.</text>
</comment>
<comment type="disruption phenotype">
    <text evidence="2 4">No visible effect on growth (PubMed:7704259). Decreased sporulation at 37 and 47 degrees Celsius (PubMed:14586115).</text>
</comment>
<comment type="similarity">
    <text evidence="6">Belongs to the bacterial ribosomal protein bS1 family.</text>
</comment>
<organism>
    <name type="scientific">Bacillus subtilis (strain 168)</name>
    <dbReference type="NCBI Taxonomy" id="224308"/>
    <lineage>
        <taxon>Bacteria</taxon>
        <taxon>Bacillati</taxon>
        <taxon>Bacillota</taxon>
        <taxon>Bacilli</taxon>
        <taxon>Bacillales</taxon>
        <taxon>Bacillaceae</taxon>
        <taxon>Bacillus</taxon>
    </lineage>
</organism>
<accession>P38494</accession>
<keyword id="KW-0597">Phosphoprotein</keyword>
<keyword id="KW-1185">Reference proteome</keyword>
<keyword id="KW-0677">Repeat</keyword>
<keyword id="KW-0687">Ribonucleoprotein</keyword>
<keyword id="KW-0689">Ribosomal protein</keyword>
<keyword id="KW-0694">RNA-binding</keyword>
<dbReference type="EMBL" id="U11687">
    <property type="protein sequence ID" value="AAA85150.1"/>
    <property type="molecule type" value="Genomic_DNA"/>
</dbReference>
<dbReference type="EMBL" id="L47648">
    <property type="protein sequence ID" value="AAC83962.1"/>
    <property type="molecule type" value="Genomic_DNA"/>
</dbReference>
<dbReference type="EMBL" id="AL009126">
    <property type="protein sequence ID" value="CAB14204.1"/>
    <property type="molecule type" value="Genomic_DNA"/>
</dbReference>
<dbReference type="PIR" id="B69935">
    <property type="entry name" value="B69935"/>
</dbReference>
<dbReference type="SMR" id="P38494"/>
<dbReference type="FunCoup" id="P38494">
    <property type="interactions" value="693"/>
</dbReference>
<dbReference type="IntAct" id="P38494">
    <property type="interactions" value="1"/>
</dbReference>
<dbReference type="MINT" id="P38494"/>
<dbReference type="STRING" id="224308.BSU22880"/>
<dbReference type="iPTMnet" id="P38494"/>
<dbReference type="jPOST" id="P38494"/>
<dbReference type="PaxDb" id="224308-BSU22880"/>
<dbReference type="DNASU" id="938986"/>
<dbReference type="EnsemblBacteria" id="CAB14204">
    <property type="protein sequence ID" value="CAB14204"/>
    <property type="gene ID" value="BSU_22880"/>
</dbReference>
<dbReference type="GeneID" id="938986"/>
<dbReference type="KEGG" id="bsu:BSU22880"/>
<dbReference type="PATRIC" id="fig|224308.179.peg.2495"/>
<dbReference type="eggNOG" id="COG0539">
    <property type="taxonomic scope" value="Bacteria"/>
</dbReference>
<dbReference type="InParanoid" id="P38494"/>
<dbReference type="OrthoDB" id="9804077at2"/>
<dbReference type="PhylomeDB" id="P38494"/>
<dbReference type="BioCyc" id="BSUB:BSU22880-MONOMER"/>
<dbReference type="Proteomes" id="UP000001570">
    <property type="component" value="Chromosome"/>
</dbReference>
<dbReference type="GO" id="GO:0022627">
    <property type="term" value="C:cytosolic small ribosomal subunit"/>
    <property type="evidence" value="ECO:0000318"/>
    <property type="project" value="GO_Central"/>
</dbReference>
<dbReference type="GO" id="GO:0003729">
    <property type="term" value="F:mRNA binding"/>
    <property type="evidence" value="ECO:0000318"/>
    <property type="project" value="GO_Central"/>
</dbReference>
<dbReference type="GO" id="GO:0003735">
    <property type="term" value="F:structural constituent of ribosome"/>
    <property type="evidence" value="ECO:0000318"/>
    <property type="project" value="GO_Central"/>
</dbReference>
<dbReference type="GO" id="GO:0006412">
    <property type="term" value="P:translation"/>
    <property type="evidence" value="ECO:0000318"/>
    <property type="project" value="GO_Central"/>
</dbReference>
<dbReference type="CDD" id="cd05687">
    <property type="entry name" value="S1_RPS1_repeat_ec1_hs1"/>
    <property type="match status" value="1"/>
</dbReference>
<dbReference type="CDD" id="cd04465">
    <property type="entry name" value="S1_RPS1_repeat_ec2_hs2"/>
    <property type="match status" value="1"/>
</dbReference>
<dbReference type="CDD" id="cd05688">
    <property type="entry name" value="S1_RPS1_repeat_ec3"/>
    <property type="match status" value="1"/>
</dbReference>
<dbReference type="FunFam" id="2.40.50.140:FF:000114">
    <property type="entry name" value="30S ribosomal protein S1"/>
    <property type="match status" value="2"/>
</dbReference>
<dbReference type="FunFam" id="2.40.50.140:FF:000166">
    <property type="entry name" value="30S ribosomal protein S1"/>
    <property type="match status" value="1"/>
</dbReference>
<dbReference type="FunFam" id="2.40.50.140:FF:000182">
    <property type="entry name" value="30S ribosomal protein S1"/>
    <property type="match status" value="1"/>
</dbReference>
<dbReference type="Gene3D" id="2.40.50.140">
    <property type="entry name" value="Nucleic acid-binding proteins"/>
    <property type="match status" value="4"/>
</dbReference>
<dbReference type="InterPro" id="IPR012340">
    <property type="entry name" value="NA-bd_OB-fold"/>
</dbReference>
<dbReference type="InterPro" id="IPR050437">
    <property type="entry name" value="Ribos_protein_bS1-like"/>
</dbReference>
<dbReference type="InterPro" id="IPR035104">
    <property type="entry name" value="Ribosomal_protein_S1-like"/>
</dbReference>
<dbReference type="InterPro" id="IPR003029">
    <property type="entry name" value="S1_domain"/>
</dbReference>
<dbReference type="NCBIfam" id="NF005208">
    <property type="entry name" value="PRK06676.1"/>
    <property type="match status" value="1"/>
</dbReference>
<dbReference type="PANTHER" id="PTHR10724">
    <property type="entry name" value="30S RIBOSOMAL PROTEIN S1"/>
    <property type="match status" value="1"/>
</dbReference>
<dbReference type="Pfam" id="PF00575">
    <property type="entry name" value="S1"/>
    <property type="match status" value="4"/>
</dbReference>
<dbReference type="PRINTS" id="PR00681">
    <property type="entry name" value="RIBOSOMALS1"/>
</dbReference>
<dbReference type="SMART" id="SM00316">
    <property type="entry name" value="S1"/>
    <property type="match status" value="4"/>
</dbReference>
<dbReference type="SUPFAM" id="SSF50249">
    <property type="entry name" value="Nucleic acid-binding proteins"/>
    <property type="match status" value="4"/>
</dbReference>
<dbReference type="PROSITE" id="PS50126">
    <property type="entry name" value="S1"/>
    <property type="match status" value="4"/>
</dbReference>
<reference key="1">
    <citation type="journal article" date="1995" name="Microbiology">
        <title>The Bacillus subtilis chromosome region encoding homologues of the Escherichia coli mssA and rpsA gene products.</title>
        <authorList>
            <person name="Sorokin A.V."/>
            <person name="Serror P."/>
            <person name="Pujic P."/>
            <person name="Azevedo V."/>
            <person name="Ehrlich S.D."/>
        </authorList>
    </citation>
    <scope>NUCLEOTIDE SEQUENCE [GENOMIC DNA]</scope>
    <scope>INDUCTION</scope>
    <scope>DISRUPTION PHENOTYPE</scope>
    <source>
        <strain>168 / Marburg / ATCC 6051 / DSM 10 / JCM 1465 / NBRC 13719 / NCIMB 3610 / NRRL NRS-744 / VKM B-501</strain>
    </source>
</reference>
<reference key="2">
    <citation type="journal article" date="1997" name="Nature">
        <title>The complete genome sequence of the Gram-positive bacterium Bacillus subtilis.</title>
        <authorList>
            <person name="Kunst F."/>
            <person name="Ogasawara N."/>
            <person name="Moszer I."/>
            <person name="Albertini A.M."/>
            <person name="Alloni G."/>
            <person name="Azevedo V."/>
            <person name="Bertero M.G."/>
            <person name="Bessieres P."/>
            <person name="Bolotin A."/>
            <person name="Borchert S."/>
            <person name="Borriss R."/>
            <person name="Boursier L."/>
            <person name="Brans A."/>
            <person name="Braun M."/>
            <person name="Brignell S.C."/>
            <person name="Bron S."/>
            <person name="Brouillet S."/>
            <person name="Bruschi C.V."/>
            <person name="Caldwell B."/>
            <person name="Capuano V."/>
            <person name="Carter N.M."/>
            <person name="Choi S.-K."/>
            <person name="Codani J.-J."/>
            <person name="Connerton I.F."/>
            <person name="Cummings N.J."/>
            <person name="Daniel R.A."/>
            <person name="Denizot F."/>
            <person name="Devine K.M."/>
            <person name="Duesterhoeft A."/>
            <person name="Ehrlich S.D."/>
            <person name="Emmerson P.T."/>
            <person name="Entian K.-D."/>
            <person name="Errington J."/>
            <person name="Fabret C."/>
            <person name="Ferrari E."/>
            <person name="Foulger D."/>
            <person name="Fritz C."/>
            <person name="Fujita M."/>
            <person name="Fujita Y."/>
            <person name="Fuma S."/>
            <person name="Galizzi A."/>
            <person name="Galleron N."/>
            <person name="Ghim S.-Y."/>
            <person name="Glaser P."/>
            <person name="Goffeau A."/>
            <person name="Golightly E.J."/>
            <person name="Grandi G."/>
            <person name="Guiseppi G."/>
            <person name="Guy B.J."/>
            <person name="Haga K."/>
            <person name="Haiech J."/>
            <person name="Harwood C.R."/>
            <person name="Henaut A."/>
            <person name="Hilbert H."/>
            <person name="Holsappel S."/>
            <person name="Hosono S."/>
            <person name="Hullo M.-F."/>
            <person name="Itaya M."/>
            <person name="Jones L.-M."/>
            <person name="Joris B."/>
            <person name="Karamata D."/>
            <person name="Kasahara Y."/>
            <person name="Klaerr-Blanchard M."/>
            <person name="Klein C."/>
            <person name="Kobayashi Y."/>
            <person name="Koetter P."/>
            <person name="Koningstein G."/>
            <person name="Krogh S."/>
            <person name="Kumano M."/>
            <person name="Kurita K."/>
            <person name="Lapidus A."/>
            <person name="Lardinois S."/>
            <person name="Lauber J."/>
            <person name="Lazarevic V."/>
            <person name="Lee S.-M."/>
            <person name="Levine A."/>
            <person name="Liu H."/>
            <person name="Masuda S."/>
            <person name="Mauel C."/>
            <person name="Medigue C."/>
            <person name="Medina N."/>
            <person name="Mellado R.P."/>
            <person name="Mizuno M."/>
            <person name="Moestl D."/>
            <person name="Nakai S."/>
            <person name="Noback M."/>
            <person name="Noone D."/>
            <person name="O'Reilly M."/>
            <person name="Ogawa K."/>
            <person name="Ogiwara A."/>
            <person name="Oudega B."/>
            <person name="Park S.-H."/>
            <person name="Parro V."/>
            <person name="Pohl T.M."/>
            <person name="Portetelle D."/>
            <person name="Porwollik S."/>
            <person name="Prescott A.M."/>
            <person name="Presecan E."/>
            <person name="Pujic P."/>
            <person name="Purnelle B."/>
            <person name="Rapoport G."/>
            <person name="Rey M."/>
            <person name="Reynolds S."/>
            <person name="Rieger M."/>
            <person name="Rivolta C."/>
            <person name="Rocha E."/>
            <person name="Roche B."/>
            <person name="Rose M."/>
            <person name="Sadaie Y."/>
            <person name="Sato T."/>
            <person name="Scanlan E."/>
            <person name="Schleich S."/>
            <person name="Schroeter R."/>
            <person name="Scoffone F."/>
            <person name="Sekiguchi J."/>
            <person name="Sekowska A."/>
            <person name="Seror S.J."/>
            <person name="Serror P."/>
            <person name="Shin B.-S."/>
            <person name="Soldo B."/>
            <person name="Sorokin A."/>
            <person name="Tacconi E."/>
            <person name="Takagi T."/>
            <person name="Takahashi H."/>
            <person name="Takemaru K."/>
            <person name="Takeuchi M."/>
            <person name="Tamakoshi A."/>
            <person name="Tanaka T."/>
            <person name="Terpstra P."/>
            <person name="Tognoni A."/>
            <person name="Tosato V."/>
            <person name="Uchiyama S."/>
            <person name="Vandenbol M."/>
            <person name="Vannier F."/>
            <person name="Vassarotti A."/>
            <person name="Viari A."/>
            <person name="Wambutt R."/>
            <person name="Wedler E."/>
            <person name="Wedler H."/>
            <person name="Weitzenegger T."/>
            <person name="Winters P."/>
            <person name="Wipat A."/>
            <person name="Yamamoto H."/>
            <person name="Yamane K."/>
            <person name="Yasumoto K."/>
            <person name="Yata K."/>
            <person name="Yoshida K."/>
            <person name="Yoshikawa H.-F."/>
            <person name="Zumstein E."/>
            <person name="Yoshikawa H."/>
            <person name="Danchin A."/>
        </authorList>
    </citation>
    <scope>NUCLEOTIDE SEQUENCE [LARGE SCALE GENOMIC DNA]</scope>
    <source>
        <strain>168</strain>
    </source>
</reference>
<reference key="3">
    <citation type="journal article" date="2003" name="Biosci. Biotechnol. Biochem.">
        <title>Expression profiling of translation-associated genes in sporulating Bacillus subtilis and consequence of sporulation by gene inactivation.</title>
        <authorList>
            <person name="Ohashi Y."/>
            <person name="Inaoka T."/>
            <person name="Kasai K."/>
            <person name="Ito Y."/>
            <person name="Okamoto S."/>
            <person name="Satsu H."/>
            <person name="Tozawa Y."/>
            <person name="Kawamura F."/>
            <person name="Ochi K."/>
        </authorList>
    </citation>
    <scope>DISRUPTION PHENOTYPE</scope>
    <scope>ROLE IN SPORULATION</scope>
    <source>
        <strain>168</strain>
    </source>
</reference>
<reference key="4">
    <citation type="journal article" date="2007" name="Mol. Cell. Proteomics">
        <title>The serine/threonine/tyrosine phosphoproteome of the model bacterium Bacillus subtilis.</title>
        <authorList>
            <person name="Macek B."/>
            <person name="Mijakovic I."/>
            <person name="Olsen J.V."/>
            <person name="Gnad F."/>
            <person name="Kumar C."/>
            <person name="Jensen P.R."/>
            <person name="Mann M."/>
        </authorList>
    </citation>
    <scope>PHOSPHORYLATION [LARGE SCALE ANALYSIS] AT SER-243</scope>
    <scope>IDENTIFICATION BY MASS SPECTROMETRY</scope>
    <source>
        <strain>168</strain>
    </source>
</reference>
<evidence type="ECO:0000255" key="1">
    <source>
        <dbReference type="PROSITE-ProRule" id="PRU00180"/>
    </source>
</evidence>
<evidence type="ECO:0000269" key="2">
    <source>
    </source>
</evidence>
<evidence type="ECO:0000269" key="3">
    <source>
    </source>
</evidence>
<evidence type="ECO:0000269" key="4">
    <source>
    </source>
</evidence>
<evidence type="ECO:0000303" key="5">
    <source>
    </source>
</evidence>
<evidence type="ECO:0000305" key="6"/>
<gene>
    <name evidence="5" type="primary">ypfD</name>
    <name evidence="5" type="synonym">jofD</name>
    <name type="ordered locus">BSU22880</name>
</gene>